<gene>
    <name evidence="1" type="primary">mdh</name>
    <name type="ordered locus">LHK_02423</name>
</gene>
<comment type="function">
    <text evidence="1">Catalyzes the reversible oxidation of malate to oxaloacetate.</text>
</comment>
<comment type="catalytic activity">
    <reaction evidence="1">
        <text>(S)-malate + NAD(+) = oxaloacetate + NADH + H(+)</text>
        <dbReference type="Rhea" id="RHEA:21432"/>
        <dbReference type="ChEBI" id="CHEBI:15378"/>
        <dbReference type="ChEBI" id="CHEBI:15589"/>
        <dbReference type="ChEBI" id="CHEBI:16452"/>
        <dbReference type="ChEBI" id="CHEBI:57540"/>
        <dbReference type="ChEBI" id="CHEBI:57945"/>
        <dbReference type="EC" id="1.1.1.37"/>
    </reaction>
</comment>
<comment type="similarity">
    <text evidence="1">Belongs to the LDH/MDH superfamily. MDH type 2 family.</text>
</comment>
<reference key="1">
    <citation type="journal article" date="2009" name="PLoS Genet.">
        <title>The complete genome and proteome of Laribacter hongkongensis reveal potential mechanisms for adaptations to different temperatures and habitats.</title>
        <authorList>
            <person name="Woo P.C.Y."/>
            <person name="Lau S.K.P."/>
            <person name="Tse H."/>
            <person name="Teng J.L.L."/>
            <person name="Curreem S.O."/>
            <person name="Tsang A.K.L."/>
            <person name="Fan R.Y.Y."/>
            <person name="Wong G.K.M."/>
            <person name="Huang Y."/>
            <person name="Loman N.J."/>
            <person name="Snyder L.A.S."/>
            <person name="Cai J.J."/>
            <person name="Huang J.-D."/>
            <person name="Mak W."/>
            <person name="Pallen M.J."/>
            <person name="Lok S."/>
            <person name="Yuen K.-Y."/>
        </authorList>
    </citation>
    <scope>NUCLEOTIDE SEQUENCE [LARGE SCALE GENOMIC DNA]</scope>
    <source>
        <strain>HLHK9</strain>
    </source>
</reference>
<organism>
    <name type="scientific">Laribacter hongkongensis (strain HLHK9)</name>
    <dbReference type="NCBI Taxonomy" id="557598"/>
    <lineage>
        <taxon>Bacteria</taxon>
        <taxon>Pseudomonadati</taxon>
        <taxon>Pseudomonadota</taxon>
        <taxon>Betaproteobacteria</taxon>
        <taxon>Neisseriales</taxon>
        <taxon>Aquaspirillaceae</taxon>
        <taxon>Laribacter</taxon>
    </lineage>
</organism>
<feature type="chain" id="PRO_1000185083" description="Malate dehydrogenase">
    <location>
        <begin position="1"/>
        <end position="329"/>
    </location>
</feature>
<feature type="active site" description="Proton acceptor" evidence="1">
    <location>
        <position position="190"/>
    </location>
</feature>
<feature type="binding site" evidence="1">
    <location>
        <begin position="11"/>
        <end position="17"/>
    </location>
    <ligand>
        <name>NAD(+)</name>
        <dbReference type="ChEBI" id="CHEBI:57540"/>
    </ligand>
</feature>
<feature type="binding site" evidence="1">
    <location>
        <position position="92"/>
    </location>
    <ligand>
        <name>substrate</name>
    </ligand>
</feature>
<feature type="binding site" evidence="1">
    <location>
        <position position="98"/>
    </location>
    <ligand>
        <name>substrate</name>
    </ligand>
</feature>
<feature type="binding site" evidence="1">
    <location>
        <position position="105"/>
    </location>
    <ligand>
        <name>NAD(+)</name>
        <dbReference type="ChEBI" id="CHEBI:57540"/>
    </ligand>
</feature>
<feature type="binding site" evidence="1">
    <location>
        <position position="112"/>
    </location>
    <ligand>
        <name>NAD(+)</name>
        <dbReference type="ChEBI" id="CHEBI:57540"/>
    </ligand>
</feature>
<feature type="binding site" evidence="1">
    <location>
        <begin position="129"/>
        <end position="131"/>
    </location>
    <ligand>
        <name>NAD(+)</name>
        <dbReference type="ChEBI" id="CHEBI:57540"/>
    </ligand>
</feature>
<feature type="binding site" evidence="1">
    <location>
        <position position="131"/>
    </location>
    <ligand>
        <name>substrate</name>
    </ligand>
</feature>
<feature type="binding site" evidence="1">
    <location>
        <position position="165"/>
    </location>
    <ligand>
        <name>substrate</name>
    </ligand>
</feature>
<protein>
    <recommendedName>
        <fullName evidence="1">Malate dehydrogenase</fullName>
        <ecNumber evidence="1">1.1.1.37</ecNumber>
    </recommendedName>
</protein>
<sequence>MNAPVRVAVTGAAGQIGYSLLFRIASGEMLGQNQPVILQLLDLPQAQNAVKGVMMELEDCAFPLLAGMVATDDPNVAFKDADICLLVGARPRSKGMERADLLEANGAIFTVQGKAIAENAKEDVKVLVVGNPANTNAYIARKAAEKVGRTNPANYTAMLRLDHNRALSQLAAKTGKAVASIENMAVWGNHSPTMYADYRFATVNGESVKSMINDEAWNRDVFLPTVGKRGAAIIEARGLSSAASAANAAIDHIRDWVLGTNGKWVTMGIPSDGSYGIPEGVTYGFPVTCKDGKYEIVQGLEIDEFSRACMNKTLAELEEERQGVAHLLG</sequence>
<accession>C1DB66</accession>
<dbReference type="EC" id="1.1.1.37" evidence="1"/>
<dbReference type="EMBL" id="CP001154">
    <property type="protein sequence ID" value="ACO75405.1"/>
    <property type="molecule type" value="Genomic_DNA"/>
</dbReference>
<dbReference type="RefSeq" id="WP_012697891.1">
    <property type="nucleotide sequence ID" value="NC_012559.1"/>
</dbReference>
<dbReference type="SMR" id="C1DB66"/>
<dbReference type="STRING" id="557598.LHK_02423"/>
<dbReference type="KEGG" id="lhk:LHK_02423"/>
<dbReference type="eggNOG" id="COG0039">
    <property type="taxonomic scope" value="Bacteria"/>
</dbReference>
<dbReference type="HOGENOM" id="CLU_040727_2_0_4"/>
<dbReference type="Proteomes" id="UP000002010">
    <property type="component" value="Chromosome"/>
</dbReference>
<dbReference type="GO" id="GO:0030060">
    <property type="term" value="F:L-malate dehydrogenase (NAD+) activity"/>
    <property type="evidence" value="ECO:0007669"/>
    <property type="project" value="UniProtKB-UniRule"/>
</dbReference>
<dbReference type="GO" id="GO:0006108">
    <property type="term" value="P:malate metabolic process"/>
    <property type="evidence" value="ECO:0007669"/>
    <property type="project" value="InterPro"/>
</dbReference>
<dbReference type="GO" id="GO:0006099">
    <property type="term" value="P:tricarboxylic acid cycle"/>
    <property type="evidence" value="ECO:0007669"/>
    <property type="project" value="UniProtKB-UniRule"/>
</dbReference>
<dbReference type="CDD" id="cd01338">
    <property type="entry name" value="MDH_chloroplast-like"/>
    <property type="match status" value="1"/>
</dbReference>
<dbReference type="FunFam" id="3.40.50.720:FF:000010">
    <property type="entry name" value="Malate dehydrogenase"/>
    <property type="match status" value="1"/>
</dbReference>
<dbReference type="FunFam" id="3.90.110.10:FF:000002">
    <property type="entry name" value="Malate dehydrogenase"/>
    <property type="match status" value="1"/>
</dbReference>
<dbReference type="Gene3D" id="3.90.110.10">
    <property type="entry name" value="Lactate dehydrogenase/glycoside hydrolase, family 4, C-terminal"/>
    <property type="match status" value="1"/>
</dbReference>
<dbReference type="Gene3D" id="3.40.50.720">
    <property type="entry name" value="NAD(P)-binding Rossmann-like Domain"/>
    <property type="match status" value="1"/>
</dbReference>
<dbReference type="HAMAP" id="MF_01517">
    <property type="entry name" value="Malate_dehydrog_2"/>
    <property type="match status" value="1"/>
</dbReference>
<dbReference type="InterPro" id="IPR001557">
    <property type="entry name" value="L-lactate/malate_DH"/>
</dbReference>
<dbReference type="InterPro" id="IPR022383">
    <property type="entry name" value="Lactate/malate_DH_C"/>
</dbReference>
<dbReference type="InterPro" id="IPR001236">
    <property type="entry name" value="Lactate/malate_DH_N"/>
</dbReference>
<dbReference type="InterPro" id="IPR015955">
    <property type="entry name" value="Lactate_DH/Glyco_Ohase_4_C"/>
</dbReference>
<dbReference type="InterPro" id="IPR010945">
    <property type="entry name" value="Malate_DH_type2"/>
</dbReference>
<dbReference type="InterPro" id="IPR036291">
    <property type="entry name" value="NAD(P)-bd_dom_sf"/>
</dbReference>
<dbReference type="NCBIfam" id="TIGR01759">
    <property type="entry name" value="MalateDH-SF1"/>
    <property type="match status" value="1"/>
</dbReference>
<dbReference type="NCBIfam" id="NF003916">
    <property type="entry name" value="PRK05442.1"/>
    <property type="match status" value="1"/>
</dbReference>
<dbReference type="PANTHER" id="PTHR23382">
    <property type="entry name" value="MALATE DEHYDROGENASE"/>
    <property type="match status" value="1"/>
</dbReference>
<dbReference type="Pfam" id="PF02866">
    <property type="entry name" value="Ldh_1_C"/>
    <property type="match status" value="1"/>
</dbReference>
<dbReference type="Pfam" id="PF00056">
    <property type="entry name" value="Ldh_1_N"/>
    <property type="match status" value="1"/>
</dbReference>
<dbReference type="PIRSF" id="PIRSF000102">
    <property type="entry name" value="Lac_mal_DH"/>
    <property type="match status" value="1"/>
</dbReference>
<dbReference type="SUPFAM" id="SSF56327">
    <property type="entry name" value="LDH C-terminal domain-like"/>
    <property type="match status" value="1"/>
</dbReference>
<dbReference type="SUPFAM" id="SSF51735">
    <property type="entry name" value="NAD(P)-binding Rossmann-fold domains"/>
    <property type="match status" value="1"/>
</dbReference>
<proteinExistence type="inferred from homology"/>
<evidence type="ECO:0000255" key="1">
    <source>
        <dbReference type="HAMAP-Rule" id="MF_01517"/>
    </source>
</evidence>
<name>MDH_LARHH</name>
<keyword id="KW-0520">NAD</keyword>
<keyword id="KW-0560">Oxidoreductase</keyword>
<keyword id="KW-1185">Reference proteome</keyword>
<keyword id="KW-0816">Tricarboxylic acid cycle</keyword>